<name>MHPB_ECO24</name>
<organism>
    <name type="scientific">Escherichia coli O139:H28 (strain E24377A / ETEC)</name>
    <dbReference type="NCBI Taxonomy" id="331111"/>
    <lineage>
        <taxon>Bacteria</taxon>
        <taxon>Pseudomonadati</taxon>
        <taxon>Pseudomonadota</taxon>
        <taxon>Gammaproteobacteria</taxon>
        <taxon>Enterobacterales</taxon>
        <taxon>Enterobacteriaceae</taxon>
        <taxon>Escherichia</taxon>
    </lineage>
</organism>
<reference key="1">
    <citation type="journal article" date="2008" name="J. Bacteriol.">
        <title>The pangenome structure of Escherichia coli: comparative genomic analysis of E. coli commensal and pathogenic isolates.</title>
        <authorList>
            <person name="Rasko D.A."/>
            <person name="Rosovitz M.J."/>
            <person name="Myers G.S.A."/>
            <person name="Mongodin E.F."/>
            <person name="Fricke W.F."/>
            <person name="Gajer P."/>
            <person name="Crabtree J."/>
            <person name="Sebaihia M."/>
            <person name="Thomson N.R."/>
            <person name="Chaudhuri R."/>
            <person name="Henderson I.R."/>
            <person name="Sperandio V."/>
            <person name="Ravel J."/>
        </authorList>
    </citation>
    <scope>NUCLEOTIDE SEQUENCE [LARGE SCALE GENOMIC DNA]</scope>
    <source>
        <strain>E24377A / ETEC</strain>
    </source>
</reference>
<accession>A7ZI95</accession>
<comment type="function">
    <text evidence="1">Catalyzes the non-heme iron(II)-dependent oxidative cleavage of 2,3-dihydroxyphenylpropionic acid and 2,3-dihydroxicinnamic acid into 2-hydroxy-6-ketononadienedioate and 2-hydroxy-6-ketononatrienedioate, respectively.</text>
</comment>
<comment type="catalytic activity">
    <reaction evidence="1">
        <text>3-(2,3-dihydroxyphenyl)propanoate + O2 = (2Z,4E)-2-hydroxy-6-oxonona-2,4-dienedioate + H(+)</text>
        <dbReference type="Rhea" id="RHEA:23840"/>
        <dbReference type="ChEBI" id="CHEBI:15378"/>
        <dbReference type="ChEBI" id="CHEBI:15379"/>
        <dbReference type="ChEBI" id="CHEBI:46951"/>
        <dbReference type="ChEBI" id="CHEBI:66887"/>
        <dbReference type="EC" id="1.13.11.16"/>
    </reaction>
</comment>
<comment type="catalytic activity">
    <reaction evidence="1">
        <text>(2E)-3-(2,3-dihydroxyphenyl)prop-2-enoate + O2 = (2Z,4E,7E)-2-hydroxy-6-oxonona-2,4,7-trienedioate + H(+)</text>
        <dbReference type="Rhea" id="RHEA:25054"/>
        <dbReference type="ChEBI" id="CHEBI:15378"/>
        <dbReference type="ChEBI" id="CHEBI:15379"/>
        <dbReference type="ChEBI" id="CHEBI:58642"/>
        <dbReference type="ChEBI" id="CHEBI:66888"/>
        <dbReference type="EC" id="1.13.11.16"/>
    </reaction>
</comment>
<comment type="cofactor">
    <cofactor evidence="1">
        <name>Fe(2+)</name>
        <dbReference type="ChEBI" id="CHEBI:29033"/>
    </cofactor>
</comment>
<comment type="pathway">
    <text evidence="1">Aromatic compound metabolism; 3-phenylpropanoate degradation.</text>
</comment>
<comment type="subunit">
    <text evidence="1">Homotetramer.</text>
</comment>
<comment type="similarity">
    <text evidence="1">Belongs to the LigB/MhpB extradiol dioxygenase family.</text>
</comment>
<protein>
    <recommendedName>
        <fullName evidence="1">2,3-dihydroxyphenylpropionate/2,3-dihydroxicinnamic acid 1,2-dioxygenase</fullName>
        <ecNumber evidence="1">1.13.11.16</ecNumber>
    </recommendedName>
    <alternativeName>
        <fullName evidence="1">3-carboxyethylcatechol 2,3-dioxygenase</fullName>
    </alternativeName>
</protein>
<sequence>MHAYLHCLSHSPLVGYVDPAQEVLDEVNGVIASARERIAAFSPELVVLFAPDHYNGFFYDVMPPFCLGVGATAIGDFGSAAGELPVPVELAEACAHAVMKSGIDLAVSYCMQVDHGFAQPLEFLLGGLDKVPVLPVFINGVATPLPGFQRTRMLGEAIGRFTSTLNKRVLFLGSGGLSHQPPVPELAKADAHMRDRLLGSGKDLPASERELRQQRVISAAEKFVEDQRTLHPLNPIWDNQFMTLLEQGRIQELDAVSNEELSAIAGKSTHEIKTWVAAFAAISTFGNWRSEGRYYRPIPEWIAGFGSLSARTEN</sequence>
<dbReference type="EC" id="1.13.11.16" evidence="1"/>
<dbReference type="EMBL" id="CP000800">
    <property type="protein sequence ID" value="ABV19400.1"/>
    <property type="molecule type" value="Genomic_DNA"/>
</dbReference>
<dbReference type="RefSeq" id="WP_000543459.1">
    <property type="nucleotide sequence ID" value="NC_009801.1"/>
</dbReference>
<dbReference type="SMR" id="A7ZI95"/>
<dbReference type="KEGG" id="ecw:EcE24377A_0372"/>
<dbReference type="HOGENOM" id="CLU_078149_0_0_6"/>
<dbReference type="UniPathway" id="UPA00714"/>
<dbReference type="Proteomes" id="UP000001122">
    <property type="component" value="Chromosome"/>
</dbReference>
<dbReference type="GO" id="GO:0047070">
    <property type="term" value="F:3-carboxyethylcatechol 2,3-dioxygenase activity"/>
    <property type="evidence" value="ECO:0007669"/>
    <property type="project" value="UniProtKB-UniRule"/>
</dbReference>
<dbReference type="GO" id="GO:0008198">
    <property type="term" value="F:ferrous iron binding"/>
    <property type="evidence" value="ECO:0007669"/>
    <property type="project" value="InterPro"/>
</dbReference>
<dbReference type="GO" id="GO:0019380">
    <property type="term" value="P:3-phenylpropionate catabolic process"/>
    <property type="evidence" value="ECO:0007669"/>
    <property type="project" value="UniProtKB-UniRule"/>
</dbReference>
<dbReference type="CDD" id="cd07365">
    <property type="entry name" value="MhpB_like"/>
    <property type="match status" value="1"/>
</dbReference>
<dbReference type="Gene3D" id="3.40.830.10">
    <property type="entry name" value="LigB-like"/>
    <property type="match status" value="1"/>
</dbReference>
<dbReference type="HAMAP" id="MF_01653">
    <property type="entry name" value="MhpB"/>
    <property type="match status" value="1"/>
</dbReference>
<dbReference type="InterPro" id="IPR023789">
    <property type="entry name" value="DHPP/DHXA_dioxygenase"/>
</dbReference>
<dbReference type="InterPro" id="IPR004183">
    <property type="entry name" value="Xdiol_dOase_suB"/>
</dbReference>
<dbReference type="NCBIfam" id="NF009907">
    <property type="entry name" value="PRK13370.1-1"/>
    <property type="match status" value="1"/>
</dbReference>
<dbReference type="NCBIfam" id="NF009910">
    <property type="entry name" value="PRK13370.1-4"/>
    <property type="match status" value="1"/>
</dbReference>
<dbReference type="Pfam" id="PF02900">
    <property type="entry name" value="LigB"/>
    <property type="match status" value="1"/>
</dbReference>
<dbReference type="SUPFAM" id="SSF53213">
    <property type="entry name" value="LigB-like"/>
    <property type="match status" value="1"/>
</dbReference>
<gene>
    <name evidence="1" type="primary">mhpB</name>
    <name type="ordered locus">EcE24377A_0372</name>
</gene>
<keyword id="KW-0058">Aromatic hydrocarbons catabolism</keyword>
<keyword id="KW-0223">Dioxygenase</keyword>
<keyword id="KW-0408">Iron</keyword>
<keyword id="KW-0560">Oxidoreductase</keyword>
<keyword id="KW-1185">Reference proteome</keyword>
<evidence type="ECO:0000255" key="1">
    <source>
        <dbReference type="HAMAP-Rule" id="MF_01653"/>
    </source>
</evidence>
<feature type="chain" id="PRO_0000337650" description="2,3-dihydroxyphenylpropionate/2,3-dihydroxicinnamic acid 1,2-dioxygenase">
    <location>
        <begin position="1"/>
        <end position="314"/>
    </location>
</feature>
<feature type="active site" description="Proton donor" evidence="1">
    <location>
        <position position="115"/>
    </location>
</feature>
<feature type="active site" description="Proton acceptor" evidence="1">
    <location>
        <position position="179"/>
    </location>
</feature>
<proteinExistence type="inferred from homology"/>